<evidence type="ECO:0000250" key="1"/>
<evidence type="ECO:0000250" key="2">
    <source>
        <dbReference type="UniProtKB" id="Q5XIE5"/>
    </source>
</evidence>
<evidence type="ECO:0000255" key="3"/>
<evidence type="ECO:0000255" key="4">
    <source>
        <dbReference type="PROSITE-ProRule" id="PRU00623"/>
    </source>
</evidence>
<evidence type="ECO:0000305" key="5"/>
<protein>
    <recommendedName>
        <fullName>E3 ubiquitin-protein ligase MARCHF3</fullName>
        <ecNumber>2.3.2.27</ecNumber>
    </recommendedName>
    <alternativeName>
        <fullName>Membrane-associated RING finger protein 3</fullName>
    </alternativeName>
    <alternativeName>
        <fullName>Membrane-associated RING-CH protein III</fullName>
        <shortName>MARCH-III</shortName>
    </alternativeName>
    <alternativeName>
        <fullName evidence="5">RING-type E3 ubiquitin transferase MARCHF3</fullName>
    </alternativeName>
</protein>
<comment type="function">
    <text evidence="2">E3 ubiquitin-protein ligase which may be involved in endosomal trafficking. E3 ubiquitin ligases accept ubiquitin from an E2 ubiquitin-conjugating enzyme in the form of a thioester and then directly transfer the ubiquitin to targeted substrates.</text>
</comment>
<comment type="catalytic activity">
    <reaction>
        <text>S-ubiquitinyl-[E2 ubiquitin-conjugating enzyme]-L-cysteine + [acceptor protein]-L-lysine = [E2 ubiquitin-conjugating enzyme]-L-cysteine + N(6)-ubiquitinyl-[acceptor protein]-L-lysine.</text>
        <dbReference type="EC" id="2.3.2.27"/>
    </reaction>
</comment>
<comment type="pathway">
    <text>Protein modification; protein ubiquitination.</text>
</comment>
<comment type="subunit">
    <text evidence="1">Interacts with MARCHF2 and STX6.</text>
</comment>
<comment type="subcellular location">
    <subcellularLocation>
        <location>Cytoplasmic vesicle membrane</location>
        <topology>Multi-pass membrane protein</topology>
    </subcellularLocation>
    <subcellularLocation>
        <location evidence="1">Early endosome membrane</location>
        <topology evidence="1">Multi-pass membrane protein</topology>
    </subcellularLocation>
</comment>
<comment type="domain">
    <text evidence="4">The RING-CH-type zinc finger domain is required for E3 ligase activity.</text>
</comment>
<feature type="chain" id="PRO_0000055928" description="E3 ubiquitin-protein ligase MARCHF3">
    <location>
        <begin position="1"/>
        <end position="218"/>
    </location>
</feature>
<feature type="transmembrane region" description="Helical" evidence="3">
    <location>
        <begin position="145"/>
        <end position="165"/>
    </location>
</feature>
<feature type="transmembrane region" description="Helical" evidence="3">
    <location>
        <begin position="180"/>
        <end position="200"/>
    </location>
</feature>
<feature type="zinc finger region" description="RING-CH-type" evidence="4">
    <location>
        <begin position="63"/>
        <end position="123"/>
    </location>
</feature>
<feature type="binding site" evidence="4">
    <location>
        <position position="71"/>
    </location>
    <ligand>
        <name>Zn(2+)</name>
        <dbReference type="ChEBI" id="CHEBI:29105"/>
        <label>1</label>
    </ligand>
</feature>
<feature type="binding site" evidence="4">
    <location>
        <position position="74"/>
    </location>
    <ligand>
        <name>Zn(2+)</name>
        <dbReference type="ChEBI" id="CHEBI:29105"/>
        <label>1</label>
    </ligand>
</feature>
<feature type="binding site" evidence="4">
    <location>
        <position position="87"/>
    </location>
    <ligand>
        <name>Zn(2+)</name>
        <dbReference type="ChEBI" id="CHEBI:29105"/>
        <label>2</label>
    </ligand>
</feature>
<feature type="binding site" evidence="4">
    <location>
        <position position="89"/>
    </location>
    <ligand>
        <name>Zn(2+)</name>
        <dbReference type="ChEBI" id="CHEBI:29105"/>
        <label>2</label>
    </ligand>
</feature>
<feature type="binding site" evidence="4">
    <location>
        <position position="97"/>
    </location>
    <ligand>
        <name>Zn(2+)</name>
        <dbReference type="ChEBI" id="CHEBI:29105"/>
        <label>1</label>
    </ligand>
</feature>
<feature type="binding site" evidence="4">
    <location>
        <position position="100"/>
    </location>
    <ligand>
        <name>Zn(2+)</name>
        <dbReference type="ChEBI" id="CHEBI:29105"/>
        <label>1</label>
    </ligand>
</feature>
<feature type="binding site" evidence="4">
    <location>
        <position position="113"/>
    </location>
    <ligand>
        <name>Zn(2+)</name>
        <dbReference type="ChEBI" id="CHEBI:29105"/>
        <label>2</label>
    </ligand>
</feature>
<feature type="binding site" evidence="4">
    <location>
        <position position="116"/>
    </location>
    <ligand>
        <name>Zn(2+)</name>
        <dbReference type="ChEBI" id="CHEBI:29105"/>
        <label>2</label>
    </ligand>
</feature>
<keyword id="KW-0968">Cytoplasmic vesicle</keyword>
<keyword id="KW-0254">Endocytosis</keyword>
<keyword id="KW-0967">Endosome</keyword>
<keyword id="KW-0472">Membrane</keyword>
<keyword id="KW-0479">Metal-binding</keyword>
<keyword id="KW-1185">Reference proteome</keyword>
<keyword id="KW-0808">Transferase</keyword>
<keyword id="KW-0812">Transmembrane</keyword>
<keyword id="KW-1133">Transmembrane helix</keyword>
<keyword id="KW-0833">Ubl conjugation pathway</keyword>
<keyword id="KW-0862">Zinc</keyword>
<keyword id="KW-0863">Zinc-finger</keyword>
<sequence length="218" mass="24491">MTTSRCSHLPEVLPDCTSSAAPVVKTVEDCGSLVNGQPQYVMQVSAKDGQLLSTVVRTLATQSPFNDRPMCRICHEGSSQEDLLSPCECTGTLGTIHRSCLEHWLSSSNTSYCELCHFRFAVERKPRPLVEWLRNPGPQHEKRTLFGDMVCFLFITPLATISGWLCLRGAVDHLHFSSRLEAVGLIALTVALFTIYLFWTLRRYGHQSKPFWNQSSRS</sequence>
<proteinExistence type="evidence at transcript level"/>
<name>MARH3_MOUSE</name>
<reference key="1">
    <citation type="journal article" date="2005" name="Science">
        <title>The transcriptional landscape of the mammalian genome.</title>
        <authorList>
            <person name="Carninci P."/>
            <person name="Kasukawa T."/>
            <person name="Katayama S."/>
            <person name="Gough J."/>
            <person name="Frith M.C."/>
            <person name="Maeda N."/>
            <person name="Oyama R."/>
            <person name="Ravasi T."/>
            <person name="Lenhard B."/>
            <person name="Wells C."/>
            <person name="Kodzius R."/>
            <person name="Shimokawa K."/>
            <person name="Bajic V.B."/>
            <person name="Brenner S.E."/>
            <person name="Batalov S."/>
            <person name="Forrest A.R."/>
            <person name="Zavolan M."/>
            <person name="Davis M.J."/>
            <person name="Wilming L.G."/>
            <person name="Aidinis V."/>
            <person name="Allen J.E."/>
            <person name="Ambesi-Impiombato A."/>
            <person name="Apweiler R."/>
            <person name="Aturaliya R.N."/>
            <person name="Bailey T.L."/>
            <person name="Bansal M."/>
            <person name="Baxter L."/>
            <person name="Beisel K.W."/>
            <person name="Bersano T."/>
            <person name="Bono H."/>
            <person name="Chalk A.M."/>
            <person name="Chiu K.P."/>
            <person name="Choudhary V."/>
            <person name="Christoffels A."/>
            <person name="Clutterbuck D.R."/>
            <person name="Crowe M.L."/>
            <person name="Dalla E."/>
            <person name="Dalrymple B.P."/>
            <person name="de Bono B."/>
            <person name="Della Gatta G."/>
            <person name="di Bernardo D."/>
            <person name="Down T."/>
            <person name="Engstrom P."/>
            <person name="Fagiolini M."/>
            <person name="Faulkner G."/>
            <person name="Fletcher C.F."/>
            <person name="Fukushima T."/>
            <person name="Furuno M."/>
            <person name="Futaki S."/>
            <person name="Gariboldi M."/>
            <person name="Georgii-Hemming P."/>
            <person name="Gingeras T.R."/>
            <person name="Gojobori T."/>
            <person name="Green R.E."/>
            <person name="Gustincich S."/>
            <person name="Harbers M."/>
            <person name="Hayashi Y."/>
            <person name="Hensch T.K."/>
            <person name="Hirokawa N."/>
            <person name="Hill D."/>
            <person name="Huminiecki L."/>
            <person name="Iacono M."/>
            <person name="Ikeo K."/>
            <person name="Iwama A."/>
            <person name="Ishikawa T."/>
            <person name="Jakt M."/>
            <person name="Kanapin A."/>
            <person name="Katoh M."/>
            <person name="Kawasawa Y."/>
            <person name="Kelso J."/>
            <person name="Kitamura H."/>
            <person name="Kitano H."/>
            <person name="Kollias G."/>
            <person name="Krishnan S.P."/>
            <person name="Kruger A."/>
            <person name="Kummerfeld S.K."/>
            <person name="Kurochkin I.V."/>
            <person name="Lareau L.F."/>
            <person name="Lazarevic D."/>
            <person name="Lipovich L."/>
            <person name="Liu J."/>
            <person name="Liuni S."/>
            <person name="McWilliam S."/>
            <person name="Madan Babu M."/>
            <person name="Madera M."/>
            <person name="Marchionni L."/>
            <person name="Matsuda H."/>
            <person name="Matsuzawa S."/>
            <person name="Miki H."/>
            <person name="Mignone F."/>
            <person name="Miyake S."/>
            <person name="Morris K."/>
            <person name="Mottagui-Tabar S."/>
            <person name="Mulder N."/>
            <person name="Nakano N."/>
            <person name="Nakauchi H."/>
            <person name="Ng P."/>
            <person name="Nilsson R."/>
            <person name="Nishiguchi S."/>
            <person name="Nishikawa S."/>
            <person name="Nori F."/>
            <person name="Ohara O."/>
            <person name="Okazaki Y."/>
            <person name="Orlando V."/>
            <person name="Pang K.C."/>
            <person name="Pavan W.J."/>
            <person name="Pavesi G."/>
            <person name="Pesole G."/>
            <person name="Petrovsky N."/>
            <person name="Piazza S."/>
            <person name="Reed J."/>
            <person name="Reid J.F."/>
            <person name="Ring B.Z."/>
            <person name="Ringwald M."/>
            <person name="Rost B."/>
            <person name="Ruan Y."/>
            <person name="Salzberg S.L."/>
            <person name="Sandelin A."/>
            <person name="Schneider C."/>
            <person name="Schoenbach C."/>
            <person name="Sekiguchi K."/>
            <person name="Semple C.A."/>
            <person name="Seno S."/>
            <person name="Sessa L."/>
            <person name="Sheng Y."/>
            <person name="Shibata Y."/>
            <person name="Shimada H."/>
            <person name="Shimada K."/>
            <person name="Silva D."/>
            <person name="Sinclair B."/>
            <person name="Sperling S."/>
            <person name="Stupka E."/>
            <person name="Sugiura K."/>
            <person name="Sultana R."/>
            <person name="Takenaka Y."/>
            <person name="Taki K."/>
            <person name="Tammoja K."/>
            <person name="Tan S.L."/>
            <person name="Tang S."/>
            <person name="Taylor M.S."/>
            <person name="Tegner J."/>
            <person name="Teichmann S.A."/>
            <person name="Ueda H.R."/>
            <person name="van Nimwegen E."/>
            <person name="Verardo R."/>
            <person name="Wei C.L."/>
            <person name="Yagi K."/>
            <person name="Yamanishi H."/>
            <person name="Zabarovsky E."/>
            <person name="Zhu S."/>
            <person name="Zimmer A."/>
            <person name="Hide W."/>
            <person name="Bult C."/>
            <person name="Grimmond S.M."/>
            <person name="Teasdale R.D."/>
            <person name="Liu E.T."/>
            <person name="Brusic V."/>
            <person name="Quackenbush J."/>
            <person name="Wahlestedt C."/>
            <person name="Mattick J.S."/>
            <person name="Hume D.A."/>
            <person name="Kai C."/>
            <person name="Sasaki D."/>
            <person name="Tomaru Y."/>
            <person name="Fukuda S."/>
            <person name="Kanamori-Katayama M."/>
            <person name="Suzuki M."/>
            <person name="Aoki J."/>
            <person name="Arakawa T."/>
            <person name="Iida J."/>
            <person name="Imamura K."/>
            <person name="Itoh M."/>
            <person name="Kato T."/>
            <person name="Kawaji H."/>
            <person name="Kawagashira N."/>
            <person name="Kawashima T."/>
            <person name="Kojima M."/>
            <person name="Kondo S."/>
            <person name="Konno H."/>
            <person name="Nakano K."/>
            <person name="Ninomiya N."/>
            <person name="Nishio T."/>
            <person name="Okada M."/>
            <person name="Plessy C."/>
            <person name="Shibata K."/>
            <person name="Shiraki T."/>
            <person name="Suzuki S."/>
            <person name="Tagami M."/>
            <person name="Waki K."/>
            <person name="Watahiki A."/>
            <person name="Okamura-Oho Y."/>
            <person name="Suzuki H."/>
            <person name="Kawai J."/>
            <person name="Hayashizaki Y."/>
        </authorList>
    </citation>
    <scope>NUCLEOTIDE SEQUENCE [LARGE SCALE MRNA]</scope>
    <source>
        <strain>C57BL/6J</strain>
        <tissue>Aorta</tissue>
        <tissue>Vein</tissue>
    </source>
</reference>
<reference key="2">
    <citation type="journal article" date="2004" name="Genome Res.">
        <title>The status, quality, and expansion of the NIH full-length cDNA project: the Mammalian Gene Collection (MGC).</title>
        <authorList>
            <consortium name="The MGC Project Team"/>
        </authorList>
    </citation>
    <scope>NUCLEOTIDE SEQUENCE [LARGE SCALE MRNA]</scope>
</reference>
<dbReference type="EC" id="2.3.2.27"/>
<dbReference type="EMBL" id="AK041088">
    <property type="protein sequence ID" value="BAC30814.1"/>
    <property type="molecule type" value="mRNA"/>
</dbReference>
<dbReference type="EMBL" id="BC107233">
    <property type="protein sequence ID" value="AAI07234.1"/>
    <property type="molecule type" value="mRNA"/>
</dbReference>
<dbReference type="EMBL" id="BC107232">
    <property type="protein sequence ID" value="AAI07233.1"/>
    <property type="molecule type" value="mRNA"/>
</dbReference>
<dbReference type="CCDS" id="CCDS29262.1"/>
<dbReference type="RefSeq" id="NP_796089.1">
    <property type="nucleotide sequence ID" value="NM_177115.3"/>
</dbReference>
<dbReference type="SMR" id="Q8BRX9"/>
<dbReference type="FunCoup" id="Q8BRX9">
    <property type="interactions" value="904"/>
</dbReference>
<dbReference type="STRING" id="10090.ENSMUSP00000099976"/>
<dbReference type="iPTMnet" id="Q8BRX9"/>
<dbReference type="PhosphoSitePlus" id="Q8BRX9"/>
<dbReference type="PaxDb" id="10090-ENSMUSP00000099976"/>
<dbReference type="ProteomicsDB" id="295795"/>
<dbReference type="Antibodypedia" id="25757">
    <property type="antibodies" value="163 antibodies from 27 providers"/>
</dbReference>
<dbReference type="Ensembl" id="ENSMUST00000102912.8">
    <property type="protein sequence ID" value="ENSMUSP00000099976.2"/>
    <property type="gene ID" value="ENSMUSG00000032656.15"/>
</dbReference>
<dbReference type="GeneID" id="320253"/>
<dbReference type="KEGG" id="mmu:320253"/>
<dbReference type="UCSC" id="uc008eyv.1">
    <property type="organism name" value="mouse"/>
</dbReference>
<dbReference type="AGR" id="MGI:2443667"/>
<dbReference type="CTD" id="115123"/>
<dbReference type="MGI" id="MGI:2443667">
    <property type="gene designation" value="Marchf3"/>
</dbReference>
<dbReference type="VEuPathDB" id="HostDB:ENSMUSG00000032656"/>
<dbReference type="eggNOG" id="KOG1609">
    <property type="taxonomic scope" value="Eukaryota"/>
</dbReference>
<dbReference type="GeneTree" id="ENSGT00940000159206"/>
<dbReference type="InParanoid" id="Q8BRX9"/>
<dbReference type="TreeFam" id="TF319557"/>
<dbReference type="UniPathway" id="UPA00143"/>
<dbReference type="BioGRID-ORCS" id="320253">
    <property type="hits" value="0 hits in 9 CRISPR screens"/>
</dbReference>
<dbReference type="ChiTaRS" id="March3">
    <property type="organism name" value="mouse"/>
</dbReference>
<dbReference type="PRO" id="PR:Q8BRX9"/>
<dbReference type="Proteomes" id="UP000000589">
    <property type="component" value="Chromosome 18"/>
</dbReference>
<dbReference type="RNAct" id="Q8BRX9">
    <property type="molecule type" value="protein"/>
</dbReference>
<dbReference type="Bgee" id="ENSMUSG00000032656">
    <property type="expression patterns" value="Expressed in bone marrow and 64 other cell types or tissues"/>
</dbReference>
<dbReference type="ExpressionAtlas" id="Q8BRX9">
    <property type="expression patterns" value="baseline and differential"/>
</dbReference>
<dbReference type="GO" id="GO:0031901">
    <property type="term" value="C:early endosome membrane"/>
    <property type="evidence" value="ECO:0007669"/>
    <property type="project" value="UniProtKB-SubCell"/>
</dbReference>
<dbReference type="GO" id="GO:0005768">
    <property type="term" value="C:endosome"/>
    <property type="evidence" value="ECO:0000250"/>
    <property type="project" value="UniProtKB"/>
</dbReference>
<dbReference type="GO" id="GO:0005764">
    <property type="term" value="C:lysosome"/>
    <property type="evidence" value="ECO:0000250"/>
    <property type="project" value="UniProtKB"/>
</dbReference>
<dbReference type="GO" id="GO:0016740">
    <property type="term" value="F:transferase activity"/>
    <property type="evidence" value="ECO:0007669"/>
    <property type="project" value="UniProtKB-KW"/>
</dbReference>
<dbReference type="GO" id="GO:0008270">
    <property type="term" value="F:zinc ion binding"/>
    <property type="evidence" value="ECO:0007669"/>
    <property type="project" value="UniProtKB-KW"/>
</dbReference>
<dbReference type="GO" id="GO:0006897">
    <property type="term" value="P:endocytosis"/>
    <property type="evidence" value="ECO:0007669"/>
    <property type="project" value="UniProtKB-KW"/>
</dbReference>
<dbReference type="GO" id="GO:0016567">
    <property type="term" value="P:protein ubiquitination"/>
    <property type="evidence" value="ECO:0007669"/>
    <property type="project" value="UniProtKB-UniPathway"/>
</dbReference>
<dbReference type="FunFam" id="3.30.40.10:FF:000119">
    <property type="entry name" value="E3 ubiquitin-protein ligase MARCH2"/>
    <property type="match status" value="1"/>
</dbReference>
<dbReference type="Gene3D" id="3.30.40.10">
    <property type="entry name" value="Zinc/RING finger domain, C3HC4 (zinc finger)"/>
    <property type="match status" value="1"/>
</dbReference>
<dbReference type="InterPro" id="IPR001841">
    <property type="entry name" value="Znf_RING"/>
</dbReference>
<dbReference type="InterPro" id="IPR011016">
    <property type="entry name" value="Znf_RING-CH"/>
</dbReference>
<dbReference type="InterPro" id="IPR013083">
    <property type="entry name" value="Znf_RING/FYVE/PHD"/>
</dbReference>
<dbReference type="PANTHER" id="PTHR46065">
    <property type="entry name" value="E3 UBIQUITIN-PROTEIN LIGASE MARCH 2/3 FAMILY MEMBER"/>
    <property type="match status" value="1"/>
</dbReference>
<dbReference type="PANTHER" id="PTHR46065:SF2">
    <property type="entry name" value="E3 UBIQUITIN-PROTEIN LIGASE MARCHF3"/>
    <property type="match status" value="1"/>
</dbReference>
<dbReference type="Pfam" id="PF12906">
    <property type="entry name" value="RINGv"/>
    <property type="match status" value="1"/>
</dbReference>
<dbReference type="SMART" id="SM00744">
    <property type="entry name" value="RINGv"/>
    <property type="match status" value="1"/>
</dbReference>
<dbReference type="SUPFAM" id="SSF57850">
    <property type="entry name" value="RING/U-box"/>
    <property type="match status" value="1"/>
</dbReference>
<dbReference type="PROSITE" id="PS51292">
    <property type="entry name" value="ZF_RING_CH"/>
    <property type="match status" value="1"/>
</dbReference>
<accession>Q8BRX9</accession>
<accession>Q3KNK5</accession>
<organism>
    <name type="scientific">Mus musculus</name>
    <name type="common">Mouse</name>
    <dbReference type="NCBI Taxonomy" id="10090"/>
    <lineage>
        <taxon>Eukaryota</taxon>
        <taxon>Metazoa</taxon>
        <taxon>Chordata</taxon>
        <taxon>Craniata</taxon>
        <taxon>Vertebrata</taxon>
        <taxon>Euteleostomi</taxon>
        <taxon>Mammalia</taxon>
        <taxon>Eutheria</taxon>
        <taxon>Euarchontoglires</taxon>
        <taxon>Glires</taxon>
        <taxon>Rodentia</taxon>
        <taxon>Myomorpha</taxon>
        <taxon>Muroidea</taxon>
        <taxon>Muridae</taxon>
        <taxon>Murinae</taxon>
        <taxon>Mus</taxon>
        <taxon>Mus</taxon>
    </lineage>
</organism>
<gene>
    <name type="primary">Marchf3</name>
    <name type="synonym">March3</name>
</gene>